<comment type="function">
    <text evidence="1">Provides the (R)-glutamate required for cell wall biosynthesis.</text>
</comment>
<comment type="catalytic activity">
    <reaction evidence="1">
        <text>L-glutamate = D-glutamate</text>
        <dbReference type="Rhea" id="RHEA:12813"/>
        <dbReference type="ChEBI" id="CHEBI:29985"/>
        <dbReference type="ChEBI" id="CHEBI:29986"/>
        <dbReference type="EC" id="5.1.1.3"/>
    </reaction>
</comment>
<comment type="pathway">
    <text evidence="1">Cell wall biogenesis; peptidoglycan biosynthesis.</text>
</comment>
<comment type="similarity">
    <text evidence="1">Belongs to the aspartate/glutamate racemases family.</text>
</comment>
<feature type="chain" id="PRO_1000047611" description="Glutamate racemase">
    <location>
        <begin position="1"/>
        <end position="285"/>
    </location>
</feature>
<feature type="active site" description="Proton donor/acceptor" evidence="1">
    <location>
        <position position="92"/>
    </location>
</feature>
<feature type="active site" description="Proton donor/acceptor" evidence="1">
    <location>
        <position position="204"/>
    </location>
</feature>
<feature type="binding site" evidence="1">
    <location>
        <begin position="28"/>
        <end position="29"/>
    </location>
    <ligand>
        <name>substrate</name>
    </ligand>
</feature>
<feature type="binding site" evidence="1">
    <location>
        <begin position="60"/>
        <end position="61"/>
    </location>
    <ligand>
        <name>substrate</name>
    </ligand>
</feature>
<feature type="binding site" evidence="1">
    <location>
        <begin position="93"/>
        <end position="94"/>
    </location>
    <ligand>
        <name>substrate</name>
    </ligand>
</feature>
<feature type="binding site" evidence="1">
    <location>
        <begin position="205"/>
        <end position="206"/>
    </location>
    <ligand>
        <name>substrate</name>
    </ligand>
</feature>
<gene>
    <name evidence="1" type="primary">murI</name>
    <name type="ordered locus">SFV_4040</name>
</gene>
<name>MURI_SHIF8</name>
<reference key="1">
    <citation type="journal article" date="2006" name="BMC Genomics">
        <title>Complete genome sequence of Shigella flexneri 5b and comparison with Shigella flexneri 2a.</title>
        <authorList>
            <person name="Nie H."/>
            <person name="Yang F."/>
            <person name="Zhang X."/>
            <person name="Yang J."/>
            <person name="Chen L."/>
            <person name="Wang J."/>
            <person name="Xiong Z."/>
            <person name="Peng J."/>
            <person name="Sun L."/>
            <person name="Dong J."/>
            <person name="Xue Y."/>
            <person name="Xu X."/>
            <person name="Chen S."/>
            <person name="Yao Z."/>
            <person name="Shen Y."/>
            <person name="Jin Q."/>
        </authorList>
    </citation>
    <scope>NUCLEOTIDE SEQUENCE [LARGE SCALE GENOMIC DNA]</scope>
    <source>
        <strain>8401</strain>
    </source>
</reference>
<dbReference type="EC" id="5.1.1.3" evidence="1"/>
<dbReference type="EMBL" id="CP000266">
    <property type="protein sequence ID" value="ABF06041.1"/>
    <property type="molecule type" value="Genomic_DNA"/>
</dbReference>
<dbReference type="RefSeq" id="WP_000201819.1">
    <property type="nucleotide sequence ID" value="NC_008258.1"/>
</dbReference>
<dbReference type="SMR" id="Q0SY24"/>
<dbReference type="GeneID" id="93777926"/>
<dbReference type="KEGG" id="sfv:SFV_4040"/>
<dbReference type="HOGENOM" id="CLU_052344_2_0_6"/>
<dbReference type="UniPathway" id="UPA00219"/>
<dbReference type="Proteomes" id="UP000000659">
    <property type="component" value="Chromosome"/>
</dbReference>
<dbReference type="GO" id="GO:0008881">
    <property type="term" value="F:glutamate racemase activity"/>
    <property type="evidence" value="ECO:0007669"/>
    <property type="project" value="UniProtKB-UniRule"/>
</dbReference>
<dbReference type="GO" id="GO:0071555">
    <property type="term" value="P:cell wall organization"/>
    <property type="evidence" value="ECO:0007669"/>
    <property type="project" value="UniProtKB-KW"/>
</dbReference>
<dbReference type="GO" id="GO:0009252">
    <property type="term" value="P:peptidoglycan biosynthetic process"/>
    <property type="evidence" value="ECO:0007669"/>
    <property type="project" value="UniProtKB-UniRule"/>
</dbReference>
<dbReference type="GO" id="GO:0008360">
    <property type="term" value="P:regulation of cell shape"/>
    <property type="evidence" value="ECO:0007669"/>
    <property type="project" value="UniProtKB-KW"/>
</dbReference>
<dbReference type="FunFam" id="3.40.50.1860:FF:000002">
    <property type="entry name" value="Glutamate racemase"/>
    <property type="match status" value="1"/>
</dbReference>
<dbReference type="Gene3D" id="3.40.50.1860">
    <property type="match status" value="2"/>
</dbReference>
<dbReference type="HAMAP" id="MF_00258">
    <property type="entry name" value="Glu_racemase"/>
    <property type="match status" value="1"/>
</dbReference>
<dbReference type="InterPro" id="IPR015942">
    <property type="entry name" value="Asp/Glu/hydantoin_racemase"/>
</dbReference>
<dbReference type="InterPro" id="IPR001920">
    <property type="entry name" value="Asp/Glu_race"/>
</dbReference>
<dbReference type="InterPro" id="IPR018187">
    <property type="entry name" value="Asp/Glu_racemase_AS_1"/>
</dbReference>
<dbReference type="InterPro" id="IPR033134">
    <property type="entry name" value="Asp/Glu_racemase_AS_2"/>
</dbReference>
<dbReference type="InterPro" id="IPR004391">
    <property type="entry name" value="Glu_race"/>
</dbReference>
<dbReference type="NCBIfam" id="TIGR00067">
    <property type="entry name" value="glut_race"/>
    <property type="match status" value="1"/>
</dbReference>
<dbReference type="NCBIfam" id="NF002034">
    <property type="entry name" value="PRK00865.1-1"/>
    <property type="match status" value="1"/>
</dbReference>
<dbReference type="PANTHER" id="PTHR21198">
    <property type="entry name" value="GLUTAMATE RACEMASE"/>
    <property type="match status" value="1"/>
</dbReference>
<dbReference type="PANTHER" id="PTHR21198:SF2">
    <property type="entry name" value="GLUTAMATE RACEMASE"/>
    <property type="match status" value="1"/>
</dbReference>
<dbReference type="Pfam" id="PF01177">
    <property type="entry name" value="Asp_Glu_race"/>
    <property type="match status" value="1"/>
</dbReference>
<dbReference type="SUPFAM" id="SSF53681">
    <property type="entry name" value="Aspartate/glutamate racemase"/>
    <property type="match status" value="2"/>
</dbReference>
<dbReference type="PROSITE" id="PS00923">
    <property type="entry name" value="ASP_GLU_RACEMASE_1"/>
    <property type="match status" value="1"/>
</dbReference>
<dbReference type="PROSITE" id="PS00924">
    <property type="entry name" value="ASP_GLU_RACEMASE_2"/>
    <property type="match status" value="1"/>
</dbReference>
<accession>Q0SY24</accession>
<evidence type="ECO:0000255" key="1">
    <source>
        <dbReference type="HAMAP-Rule" id="MF_00258"/>
    </source>
</evidence>
<sequence length="285" mass="31074">MATKLQDGNTPCLAATPSEPRPTVLVFDSGVGGLSVYDEIRHLLPDLHYIYAFDNVAFPYGEKSEAFIVERVVAIVTAVQERYPLALAVVACNTASTVSLPALREKFDFPVVGVVPAIKPAARLTANGIVGLLATRGTVKRSYTHELIARFANECQIEMLGSAEMVELAEAKLHGEDVSLDALKRILRPWLRMKEPPDTVVLGCTHFPLLQEELLQVLPEGTRLVDSGAAIARRTAWLLEHEAPDAKSADANIAFCMAMTPEAEQLLPVLQRYGFETLEKLAVLG</sequence>
<protein>
    <recommendedName>
        <fullName evidence="1">Glutamate racemase</fullName>
        <ecNumber evidence="1">5.1.1.3</ecNumber>
    </recommendedName>
</protein>
<organism>
    <name type="scientific">Shigella flexneri serotype 5b (strain 8401)</name>
    <dbReference type="NCBI Taxonomy" id="373384"/>
    <lineage>
        <taxon>Bacteria</taxon>
        <taxon>Pseudomonadati</taxon>
        <taxon>Pseudomonadota</taxon>
        <taxon>Gammaproteobacteria</taxon>
        <taxon>Enterobacterales</taxon>
        <taxon>Enterobacteriaceae</taxon>
        <taxon>Shigella</taxon>
    </lineage>
</organism>
<keyword id="KW-0133">Cell shape</keyword>
<keyword id="KW-0961">Cell wall biogenesis/degradation</keyword>
<keyword id="KW-0413">Isomerase</keyword>
<keyword id="KW-0573">Peptidoglycan synthesis</keyword>
<proteinExistence type="inferred from homology"/>